<organism>
    <name type="scientific">Macrococcus caseolyticus (strain JCSC5402)</name>
    <name type="common">Macrococcoides caseolyticum</name>
    <dbReference type="NCBI Taxonomy" id="458233"/>
    <lineage>
        <taxon>Bacteria</taxon>
        <taxon>Bacillati</taxon>
        <taxon>Bacillota</taxon>
        <taxon>Bacilli</taxon>
        <taxon>Bacillales</taxon>
        <taxon>Staphylococcaceae</taxon>
        <taxon>Macrococcoides</taxon>
    </lineage>
</organism>
<evidence type="ECO:0000255" key="1">
    <source>
        <dbReference type="HAMAP-Rule" id="MF_01152"/>
    </source>
</evidence>
<sequence length="372" mass="40697">MAKRDYYEVLGLSKGASKEEIKRAYKKLSKKYHPDINKEADAEDKFKEIAEAYEVLSDDQKKAQYDQFGHAGMGQGAGFGGQDFGGFGGFEDIFSSFFGGGARRDPNAPRQGNDLQYQMNVTFEEAVFGAEKEISVKKEVECDTCDGSGAQPGTNIKTCSTCGGRGNVHVEQNTPFGRVRSERTCPDCGGTGKEFEEKCSDCGGTGRKVKTVKISVKVPAGVDTGQQIRLSGQGEPGINGGPAGDLYVVFNVQDHAYFDRSGEDIFYTLELSIAQAALGDEVEVPTLEGKVKLTIPAGTQTGKRFRLKEKGVQNVHGYGRGDEYVTVKVMTPVKMTNRQAELLREFAEIDGHDITEQPSNFFDKTKRFFKGE</sequence>
<dbReference type="EMBL" id="AP009484">
    <property type="protein sequence ID" value="BAH17938.1"/>
    <property type="molecule type" value="Genomic_DNA"/>
</dbReference>
<dbReference type="RefSeq" id="WP_012657136.1">
    <property type="nucleotide sequence ID" value="NC_011999.1"/>
</dbReference>
<dbReference type="SMR" id="B9E6X0"/>
<dbReference type="STRING" id="458233.MCCL_1231"/>
<dbReference type="KEGG" id="mcl:MCCL_1231"/>
<dbReference type="eggNOG" id="COG0484">
    <property type="taxonomic scope" value="Bacteria"/>
</dbReference>
<dbReference type="HOGENOM" id="CLU_017633_0_7_9"/>
<dbReference type="OrthoDB" id="9779889at2"/>
<dbReference type="Proteomes" id="UP000001383">
    <property type="component" value="Chromosome"/>
</dbReference>
<dbReference type="GO" id="GO:0005737">
    <property type="term" value="C:cytoplasm"/>
    <property type="evidence" value="ECO:0007669"/>
    <property type="project" value="UniProtKB-SubCell"/>
</dbReference>
<dbReference type="GO" id="GO:0005524">
    <property type="term" value="F:ATP binding"/>
    <property type="evidence" value="ECO:0007669"/>
    <property type="project" value="InterPro"/>
</dbReference>
<dbReference type="GO" id="GO:0031072">
    <property type="term" value="F:heat shock protein binding"/>
    <property type="evidence" value="ECO:0007669"/>
    <property type="project" value="InterPro"/>
</dbReference>
<dbReference type="GO" id="GO:0051082">
    <property type="term" value="F:unfolded protein binding"/>
    <property type="evidence" value="ECO:0007669"/>
    <property type="project" value="UniProtKB-UniRule"/>
</dbReference>
<dbReference type="GO" id="GO:0008270">
    <property type="term" value="F:zinc ion binding"/>
    <property type="evidence" value="ECO:0007669"/>
    <property type="project" value="UniProtKB-UniRule"/>
</dbReference>
<dbReference type="GO" id="GO:0051085">
    <property type="term" value="P:chaperone cofactor-dependent protein refolding"/>
    <property type="evidence" value="ECO:0007669"/>
    <property type="project" value="TreeGrafter"/>
</dbReference>
<dbReference type="GO" id="GO:0006260">
    <property type="term" value="P:DNA replication"/>
    <property type="evidence" value="ECO:0007669"/>
    <property type="project" value="UniProtKB-KW"/>
</dbReference>
<dbReference type="GO" id="GO:0042026">
    <property type="term" value="P:protein refolding"/>
    <property type="evidence" value="ECO:0007669"/>
    <property type="project" value="TreeGrafter"/>
</dbReference>
<dbReference type="GO" id="GO:0009408">
    <property type="term" value="P:response to heat"/>
    <property type="evidence" value="ECO:0007669"/>
    <property type="project" value="InterPro"/>
</dbReference>
<dbReference type="CDD" id="cd06257">
    <property type="entry name" value="DnaJ"/>
    <property type="match status" value="1"/>
</dbReference>
<dbReference type="CDD" id="cd10747">
    <property type="entry name" value="DnaJ_C"/>
    <property type="match status" value="1"/>
</dbReference>
<dbReference type="CDD" id="cd10719">
    <property type="entry name" value="DnaJ_zf"/>
    <property type="match status" value="1"/>
</dbReference>
<dbReference type="FunFam" id="1.10.287.110:FF:000031">
    <property type="entry name" value="Molecular chaperone DnaJ"/>
    <property type="match status" value="1"/>
</dbReference>
<dbReference type="FunFam" id="2.10.230.10:FF:000002">
    <property type="entry name" value="Molecular chaperone DnaJ"/>
    <property type="match status" value="1"/>
</dbReference>
<dbReference type="FunFam" id="2.60.260.20:FF:000004">
    <property type="entry name" value="Molecular chaperone DnaJ"/>
    <property type="match status" value="1"/>
</dbReference>
<dbReference type="Gene3D" id="1.10.287.110">
    <property type="entry name" value="DnaJ domain"/>
    <property type="match status" value="1"/>
</dbReference>
<dbReference type="Gene3D" id="2.10.230.10">
    <property type="entry name" value="Heat shock protein DnaJ, cysteine-rich domain"/>
    <property type="match status" value="1"/>
</dbReference>
<dbReference type="Gene3D" id="2.60.260.20">
    <property type="entry name" value="Urease metallochaperone UreE, N-terminal domain"/>
    <property type="match status" value="2"/>
</dbReference>
<dbReference type="HAMAP" id="MF_01152">
    <property type="entry name" value="DnaJ"/>
    <property type="match status" value="1"/>
</dbReference>
<dbReference type="InterPro" id="IPR012724">
    <property type="entry name" value="DnaJ"/>
</dbReference>
<dbReference type="InterPro" id="IPR002939">
    <property type="entry name" value="DnaJ_C"/>
</dbReference>
<dbReference type="InterPro" id="IPR001623">
    <property type="entry name" value="DnaJ_domain"/>
</dbReference>
<dbReference type="InterPro" id="IPR018253">
    <property type="entry name" value="DnaJ_domain_CS"/>
</dbReference>
<dbReference type="InterPro" id="IPR008971">
    <property type="entry name" value="HSP40/DnaJ_pept-bd"/>
</dbReference>
<dbReference type="InterPro" id="IPR001305">
    <property type="entry name" value="HSP_DnaJ_Cys-rich_dom"/>
</dbReference>
<dbReference type="InterPro" id="IPR036410">
    <property type="entry name" value="HSP_DnaJ_Cys-rich_dom_sf"/>
</dbReference>
<dbReference type="InterPro" id="IPR036869">
    <property type="entry name" value="J_dom_sf"/>
</dbReference>
<dbReference type="NCBIfam" id="TIGR02349">
    <property type="entry name" value="DnaJ_bact"/>
    <property type="match status" value="1"/>
</dbReference>
<dbReference type="NCBIfam" id="NF008035">
    <property type="entry name" value="PRK10767.1"/>
    <property type="match status" value="1"/>
</dbReference>
<dbReference type="NCBIfam" id="NF010873">
    <property type="entry name" value="PRK14280.1"/>
    <property type="match status" value="1"/>
</dbReference>
<dbReference type="PANTHER" id="PTHR43096:SF48">
    <property type="entry name" value="CHAPERONE PROTEIN DNAJ"/>
    <property type="match status" value="1"/>
</dbReference>
<dbReference type="PANTHER" id="PTHR43096">
    <property type="entry name" value="DNAJ HOMOLOG 1, MITOCHONDRIAL-RELATED"/>
    <property type="match status" value="1"/>
</dbReference>
<dbReference type="Pfam" id="PF00226">
    <property type="entry name" value="DnaJ"/>
    <property type="match status" value="1"/>
</dbReference>
<dbReference type="Pfam" id="PF01556">
    <property type="entry name" value="DnaJ_C"/>
    <property type="match status" value="1"/>
</dbReference>
<dbReference type="Pfam" id="PF00684">
    <property type="entry name" value="DnaJ_CXXCXGXG"/>
    <property type="match status" value="1"/>
</dbReference>
<dbReference type="PRINTS" id="PR00625">
    <property type="entry name" value="JDOMAIN"/>
</dbReference>
<dbReference type="SMART" id="SM00271">
    <property type="entry name" value="DnaJ"/>
    <property type="match status" value="1"/>
</dbReference>
<dbReference type="SUPFAM" id="SSF46565">
    <property type="entry name" value="Chaperone J-domain"/>
    <property type="match status" value="1"/>
</dbReference>
<dbReference type="SUPFAM" id="SSF57938">
    <property type="entry name" value="DnaJ/Hsp40 cysteine-rich domain"/>
    <property type="match status" value="1"/>
</dbReference>
<dbReference type="SUPFAM" id="SSF49493">
    <property type="entry name" value="HSP40/DnaJ peptide-binding domain"/>
    <property type="match status" value="2"/>
</dbReference>
<dbReference type="PROSITE" id="PS00636">
    <property type="entry name" value="DNAJ_1"/>
    <property type="match status" value="1"/>
</dbReference>
<dbReference type="PROSITE" id="PS50076">
    <property type="entry name" value="DNAJ_2"/>
    <property type="match status" value="1"/>
</dbReference>
<dbReference type="PROSITE" id="PS51188">
    <property type="entry name" value="ZF_CR"/>
    <property type="match status" value="1"/>
</dbReference>
<keyword id="KW-0143">Chaperone</keyword>
<keyword id="KW-0963">Cytoplasm</keyword>
<keyword id="KW-0235">DNA replication</keyword>
<keyword id="KW-0479">Metal-binding</keyword>
<keyword id="KW-1185">Reference proteome</keyword>
<keyword id="KW-0677">Repeat</keyword>
<keyword id="KW-0346">Stress response</keyword>
<keyword id="KW-0862">Zinc</keyword>
<keyword id="KW-0863">Zinc-finger</keyword>
<name>DNAJ_MACCJ</name>
<gene>
    <name evidence="1" type="primary">dnaJ</name>
    <name type="ordered locus">MCCL_1231</name>
</gene>
<feature type="chain" id="PRO_1000164267" description="Chaperone protein DnaJ">
    <location>
        <begin position="1"/>
        <end position="372"/>
    </location>
</feature>
<feature type="domain" description="J" evidence="1">
    <location>
        <begin position="5"/>
        <end position="69"/>
    </location>
</feature>
<feature type="repeat" description="CXXCXGXG motif">
    <location>
        <begin position="142"/>
        <end position="149"/>
    </location>
</feature>
<feature type="repeat" description="CXXCXGXG motif">
    <location>
        <begin position="159"/>
        <end position="166"/>
    </location>
</feature>
<feature type="repeat" description="CXXCXGXG motif">
    <location>
        <begin position="185"/>
        <end position="192"/>
    </location>
</feature>
<feature type="repeat" description="CXXCXGXG motif">
    <location>
        <begin position="199"/>
        <end position="206"/>
    </location>
</feature>
<feature type="zinc finger region" description="CR-type" evidence="1">
    <location>
        <begin position="129"/>
        <end position="211"/>
    </location>
</feature>
<feature type="binding site" evidence="1">
    <location>
        <position position="142"/>
    </location>
    <ligand>
        <name>Zn(2+)</name>
        <dbReference type="ChEBI" id="CHEBI:29105"/>
        <label>1</label>
    </ligand>
</feature>
<feature type="binding site" evidence="1">
    <location>
        <position position="145"/>
    </location>
    <ligand>
        <name>Zn(2+)</name>
        <dbReference type="ChEBI" id="CHEBI:29105"/>
        <label>1</label>
    </ligand>
</feature>
<feature type="binding site" evidence="1">
    <location>
        <position position="159"/>
    </location>
    <ligand>
        <name>Zn(2+)</name>
        <dbReference type="ChEBI" id="CHEBI:29105"/>
        <label>2</label>
    </ligand>
</feature>
<feature type="binding site" evidence="1">
    <location>
        <position position="162"/>
    </location>
    <ligand>
        <name>Zn(2+)</name>
        <dbReference type="ChEBI" id="CHEBI:29105"/>
        <label>2</label>
    </ligand>
</feature>
<feature type="binding site" evidence="1">
    <location>
        <position position="185"/>
    </location>
    <ligand>
        <name>Zn(2+)</name>
        <dbReference type="ChEBI" id="CHEBI:29105"/>
        <label>2</label>
    </ligand>
</feature>
<feature type="binding site" evidence="1">
    <location>
        <position position="188"/>
    </location>
    <ligand>
        <name>Zn(2+)</name>
        <dbReference type="ChEBI" id="CHEBI:29105"/>
        <label>2</label>
    </ligand>
</feature>
<feature type="binding site" evidence="1">
    <location>
        <position position="199"/>
    </location>
    <ligand>
        <name>Zn(2+)</name>
        <dbReference type="ChEBI" id="CHEBI:29105"/>
        <label>1</label>
    </ligand>
</feature>
<feature type="binding site" evidence="1">
    <location>
        <position position="202"/>
    </location>
    <ligand>
        <name>Zn(2+)</name>
        <dbReference type="ChEBI" id="CHEBI:29105"/>
        <label>1</label>
    </ligand>
</feature>
<reference key="1">
    <citation type="journal article" date="2009" name="J. Bacteriol.">
        <title>Complete genome sequence of Macrococcus caseolyticus strain JCSCS5402, reflecting the ancestral genome of the human-pathogenic staphylococci.</title>
        <authorList>
            <person name="Baba T."/>
            <person name="Kuwahara-Arai K."/>
            <person name="Uchiyama I."/>
            <person name="Takeuchi F."/>
            <person name="Ito T."/>
            <person name="Hiramatsu K."/>
        </authorList>
    </citation>
    <scope>NUCLEOTIDE SEQUENCE [LARGE SCALE GENOMIC DNA]</scope>
    <source>
        <strain>JCSC5402</strain>
    </source>
</reference>
<accession>B9E6X0</accession>
<comment type="function">
    <text evidence="1">Participates actively in the response to hyperosmotic and heat shock by preventing the aggregation of stress-denatured proteins and by disaggregating proteins, also in an autonomous, DnaK-independent fashion. Unfolded proteins bind initially to DnaJ; upon interaction with the DnaJ-bound protein, DnaK hydrolyzes its bound ATP, resulting in the formation of a stable complex. GrpE releases ADP from DnaK; ATP binding to DnaK triggers the release of the substrate protein, thus completing the reaction cycle. Several rounds of ATP-dependent interactions between DnaJ, DnaK and GrpE are required for fully efficient folding. Also involved, together with DnaK and GrpE, in the DNA replication of plasmids through activation of initiation proteins.</text>
</comment>
<comment type="cofactor">
    <cofactor evidence="1">
        <name>Zn(2+)</name>
        <dbReference type="ChEBI" id="CHEBI:29105"/>
    </cofactor>
    <text evidence="1">Binds 2 Zn(2+) ions per monomer.</text>
</comment>
<comment type="subunit">
    <text evidence="1">Homodimer.</text>
</comment>
<comment type="subcellular location">
    <subcellularLocation>
        <location evidence="1">Cytoplasm</location>
    </subcellularLocation>
</comment>
<comment type="domain">
    <text evidence="1">The J domain is necessary and sufficient to stimulate DnaK ATPase activity. Zinc center 1 plays an important role in the autonomous, DnaK-independent chaperone activity of DnaJ. Zinc center 2 is essential for interaction with DnaK and for DnaJ activity.</text>
</comment>
<comment type="similarity">
    <text evidence="1">Belongs to the DnaJ family.</text>
</comment>
<protein>
    <recommendedName>
        <fullName evidence="1">Chaperone protein DnaJ</fullName>
    </recommendedName>
</protein>
<proteinExistence type="inferred from homology"/>